<gene>
    <name evidence="6" type="primary">SLC25A31</name>
</gene>
<evidence type="ECO:0000250" key="1">
    <source>
        <dbReference type="UniProtKB" id="G2QNH0"/>
    </source>
</evidence>
<evidence type="ECO:0000250" key="2">
    <source>
        <dbReference type="UniProtKB" id="P02722"/>
    </source>
</evidence>
<evidence type="ECO:0000250" key="3">
    <source>
        <dbReference type="UniProtKB" id="P12235"/>
    </source>
</evidence>
<evidence type="ECO:0000250" key="4">
    <source>
        <dbReference type="UniProtKB" id="P48962"/>
    </source>
</evidence>
<evidence type="ECO:0000250" key="5">
    <source>
        <dbReference type="UniProtKB" id="Q3V132"/>
    </source>
</evidence>
<evidence type="ECO:0000250" key="6">
    <source>
        <dbReference type="UniProtKB" id="Q9H0C2"/>
    </source>
</evidence>
<evidence type="ECO:0000255" key="7"/>
<evidence type="ECO:0000305" key="8"/>
<sequence>MQREPPKRKQEKKVEKGLFDATSFGKDLLAGGVAAAVSKTTVAPIERVKLLLQVQASSKQISPEAQYKGIVDCLVRIPREQGFLSYWRGNLANVIRYFPTQALNFAFKDKYKQLFMSGVNKEKQFWRWFLANLASGGAAGATSLCVVYPLDFARTRLGADIGKGPEERQFKGLGDCIMKIAKSDGIVGLYQGFGVSVQGIIVYRASYFGAYDTVKGLLPKPKETHFLVSFFIAQVVTTCSGILSYPFDTVRRRMMMQSGEAERQYKGTLDCFMKIYQQEGIGAFFRGAFSNILRGTGGALVLVLYDKIKDLLNIDIGGSSSGD</sequence>
<keyword id="KW-0050">Antiport</keyword>
<keyword id="KW-1003">Cell membrane</keyword>
<keyword id="KW-0966">Cell projection</keyword>
<keyword id="KW-0969">Cilium</keyword>
<keyword id="KW-0221">Differentiation</keyword>
<keyword id="KW-0282">Flagellum</keyword>
<keyword id="KW-0472">Membrane</keyword>
<keyword id="KW-0496">Mitochondrion</keyword>
<keyword id="KW-0999">Mitochondrion inner membrane</keyword>
<keyword id="KW-1185">Reference proteome</keyword>
<keyword id="KW-0677">Repeat</keyword>
<keyword id="KW-0744">Spermatogenesis</keyword>
<keyword id="KW-0812">Transmembrane</keyword>
<keyword id="KW-1133">Transmembrane helix</keyword>
<keyword id="KW-0813">Transport</keyword>
<name>ADT4_BOVIN</name>
<protein>
    <recommendedName>
        <fullName evidence="8">ADP/ATP translocase 4</fullName>
    </recommendedName>
    <alternativeName>
        <fullName evidence="5">ADP,ATP carrier protein 4</fullName>
    </alternativeName>
    <alternativeName>
        <fullName evidence="5">Adenine nucleotide translocator 4</fullName>
        <shortName evidence="5">ANT 4</shortName>
    </alternativeName>
    <alternativeName>
        <fullName evidence="8">Solute carrier family 25 member 31</fullName>
    </alternativeName>
</protein>
<organism>
    <name type="scientific">Bos taurus</name>
    <name type="common">Bovine</name>
    <dbReference type="NCBI Taxonomy" id="9913"/>
    <lineage>
        <taxon>Eukaryota</taxon>
        <taxon>Metazoa</taxon>
        <taxon>Chordata</taxon>
        <taxon>Craniata</taxon>
        <taxon>Vertebrata</taxon>
        <taxon>Euteleostomi</taxon>
        <taxon>Mammalia</taxon>
        <taxon>Eutheria</taxon>
        <taxon>Laurasiatheria</taxon>
        <taxon>Artiodactyla</taxon>
        <taxon>Ruminantia</taxon>
        <taxon>Pecora</taxon>
        <taxon>Bovidae</taxon>
        <taxon>Bovinae</taxon>
        <taxon>Bos</taxon>
    </lineage>
</organism>
<accession>Q2YDD9</accession>
<reference key="1">
    <citation type="submission" date="2005-11" db="EMBL/GenBank/DDBJ databases">
        <authorList>
            <consortium name="NIH - Mammalian Gene Collection (MGC) project"/>
        </authorList>
    </citation>
    <scope>NUCLEOTIDE SEQUENCE [LARGE SCALE MRNA]</scope>
    <source>
        <strain>Crossbred X Angus</strain>
        <tissue>Liver</tissue>
    </source>
</reference>
<feature type="chain" id="PRO_0000297623" description="ADP/ATP translocase 4">
    <location>
        <begin position="1"/>
        <end position="323"/>
    </location>
</feature>
<feature type="topological domain" description="Mitochondrial intermembrane" evidence="8">
    <location>
        <begin position="1"/>
        <end position="23"/>
    </location>
</feature>
<feature type="transmembrane region" description="Helical; Name=1" evidence="2">
    <location>
        <begin position="24"/>
        <end position="53"/>
    </location>
</feature>
<feature type="topological domain" description="Mitochondrial matrix" evidence="8">
    <location>
        <begin position="54"/>
        <end position="90"/>
    </location>
</feature>
<feature type="transmembrane region" description="Helical; Name=2" evidence="2">
    <location>
        <begin position="91"/>
        <end position="115"/>
    </location>
</feature>
<feature type="topological domain" description="Mitochondrial intermembrane" evidence="8">
    <location>
        <begin position="116"/>
        <end position="125"/>
    </location>
</feature>
<feature type="transmembrane region" description="Helical; Name=3" evidence="2">
    <location>
        <begin position="126"/>
        <end position="146"/>
    </location>
</feature>
<feature type="topological domain" description="Mitochondrial matrix" evidence="8">
    <location>
        <begin position="147"/>
        <end position="194"/>
    </location>
</feature>
<feature type="transmembrane region" description="Helical; Name=4" evidence="2">
    <location>
        <begin position="195"/>
        <end position="215"/>
    </location>
</feature>
<feature type="topological domain" description="Mitochondrial intermembrane" evidence="8">
    <location>
        <begin position="216"/>
        <end position="226"/>
    </location>
</feature>
<feature type="transmembrane region" description="Helical; Name=5" evidence="2">
    <location>
        <begin position="227"/>
        <end position="247"/>
    </location>
</feature>
<feature type="topological domain" description="Mitochondrial matrix" evidence="8">
    <location>
        <begin position="248"/>
        <end position="287"/>
    </location>
</feature>
<feature type="transmembrane region" description="Helical; Name=6" evidence="2">
    <location>
        <begin position="288"/>
        <end position="305"/>
    </location>
</feature>
<feature type="topological domain" description="Mitochondrial intermembrane" evidence="8">
    <location>
        <begin position="306"/>
        <end position="323"/>
    </location>
</feature>
<feature type="repeat" description="Solcar 1">
    <location>
        <begin position="22"/>
        <end position="114"/>
    </location>
</feature>
<feature type="repeat" description="Solcar 2">
    <location>
        <begin position="127"/>
        <end position="217"/>
    </location>
</feature>
<feature type="repeat" description="Solcar 3">
    <location>
        <begin position="224"/>
        <end position="311"/>
    </location>
</feature>
<feature type="region of interest" description="Important for transport activity" evidence="3">
    <location>
        <begin position="251"/>
        <end position="256"/>
    </location>
</feature>
<feature type="short sequence motif" description="Nucleotide carrier signature motif" evidence="2">
    <location>
        <begin position="251"/>
        <end position="256"/>
    </location>
</feature>
<feature type="binding site" evidence="2">
    <location>
        <position position="96"/>
    </location>
    <ligand>
        <name>ADP</name>
        <dbReference type="ChEBI" id="CHEBI:456216"/>
    </ligand>
</feature>
<feature type="binding site" evidence="2">
    <location>
        <position position="108"/>
    </location>
    <ligand>
        <name>ADP</name>
        <dbReference type="ChEBI" id="CHEBI:456216"/>
    </ligand>
</feature>
<feature type="binding site" evidence="2">
    <location>
        <position position="251"/>
    </location>
    <ligand>
        <name>ADP</name>
        <dbReference type="ChEBI" id="CHEBI:456216"/>
    </ligand>
</feature>
<dbReference type="EMBL" id="BC110266">
    <property type="protein sequence ID" value="AAI10267.1"/>
    <property type="molecule type" value="mRNA"/>
</dbReference>
<dbReference type="RefSeq" id="NP_001039965.1">
    <property type="nucleotide sequence ID" value="NM_001046500.2"/>
</dbReference>
<dbReference type="SMR" id="Q2YDD9"/>
<dbReference type="FunCoup" id="Q2YDD9">
    <property type="interactions" value="157"/>
</dbReference>
<dbReference type="STRING" id="9913.ENSBTAP00000017042"/>
<dbReference type="PaxDb" id="9913-ENSBTAP00000017042"/>
<dbReference type="GeneID" id="541168"/>
<dbReference type="KEGG" id="bta:541168"/>
<dbReference type="CTD" id="83447"/>
<dbReference type="eggNOG" id="KOG0749">
    <property type="taxonomic scope" value="Eukaryota"/>
</dbReference>
<dbReference type="InParanoid" id="Q2YDD9"/>
<dbReference type="OrthoDB" id="270584at2759"/>
<dbReference type="Proteomes" id="UP000009136">
    <property type="component" value="Unplaced"/>
</dbReference>
<dbReference type="GO" id="GO:0016020">
    <property type="term" value="C:membrane"/>
    <property type="evidence" value="ECO:0000250"/>
    <property type="project" value="UniProtKB"/>
</dbReference>
<dbReference type="GO" id="GO:0005743">
    <property type="term" value="C:mitochondrial inner membrane"/>
    <property type="evidence" value="ECO:0007669"/>
    <property type="project" value="UniProtKB-SubCell"/>
</dbReference>
<dbReference type="GO" id="GO:0005757">
    <property type="term" value="C:mitochondrial permeability transition pore complex"/>
    <property type="evidence" value="ECO:0000250"/>
    <property type="project" value="UniProtKB"/>
</dbReference>
<dbReference type="GO" id="GO:0031514">
    <property type="term" value="C:motile cilium"/>
    <property type="evidence" value="ECO:0007669"/>
    <property type="project" value="UniProtKB-KW"/>
</dbReference>
<dbReference type="GO" id="GO:0005886">
    <property type="term" value="C:plasma membrane"/>
    <property type="evidence" value="ECO:0007669"/>
    <property type="project" value="UniProtKB-KW"/>
</dbReference>
<dbReference type="GO" id="GO:0005471">
    <property type="term" value="F:ATP:ADP antiporter activity"/>
    <property type="evidence" value="ECO:0007669"/>
    <property type="project" value="InterPro"/>
</dbReference>
<dbReference type="GO" id="GO:0030154">
    <property type="term" value="P:cell differentiation"/>
    <property type="evidence" value="ECO:0007669"/>
    <property type="project" value="UniProtKB-KW"/>
</dbReference>
<dbReference type="GO" id="GO:0007141">
    <property type="term" value="P:male meiosis I"/>
    <property type="evidence" value="ECO:0000250"/>
    <property type="project" value="UniProtKB"/>
</dbReference>
<dbReference type="GO" id="GO:0140021">
    <property type="term" value="P:mitochondrial ADP transmembrane transport"/>
    <property type="evidence" value="ECO:0007669"/>
    <property type="project" value="InterPro"/>
</dbReference>
<dbReference type="GO" id="GO:1990544">
    <property type="term" value="P:mitochondrial ATP transmembrane transport"/>
    <property type="evidence" value="ECO:0007669"/>
    <property type="project" value="InterPro"/>
</dbReference>
<dbReference type="GO" id="GO:1901029">
    <property type="term" value="P:negative regulation of mitochondrial outer membrane permeabilization involved in apoptotic signaling pathway"/>
    <property type="evidence" value="ECO:0000318"/>
    <property type="project" value="GO_Central"/>
</dbReference>
<dbReference type="GO" id="GO:0046902">
    <property type="term" value="P:regulation of mitochondrial membrane permeability"/>
    <property type="evidence" value="ECO:0000250"/>
    <property type="project" value="UniProtKB"/>
</dbReference>
<dbReference type="GO" id="GO:0007283">
    <property type="term" value="P:spermatogenesis"/>
    <property type="evidence" value="ECO:0000250"/>
    <property type="project" value="UniProtKB"/>
</dbReference>
<dbReference type="FunFam" id="1.50.40.10:FF:000002">
    <property type="entry name" value="Putative ADP/ATP translocase 2-like"/>
    <property type="match status" value="1"/>
</dbReference>
<dbReference type="Gene3D" id="1.50.40.10">
    <property type="entry name" value="Mitochondrial carrier domain"/>
    <property type="match status" value="1"/>
</dbReference>
<dbReference type="InterPro" id="IPR002113">
    <property type="entry name" value="ADT_euk_type"/>
</dbReference>
<dbReference type="InterPro" id="IPR002067">
    <property type="entry name" value="Mit_carrier"/>
</dbReference>
<dbReference type="InterPro" id="IPR018108">
    <property type="entry name" value="Mitochondrial_sb/sol_carrier"/>
</dbReference>
<dbReference type="InterPro" id="IPR023395">
    <property type="entry name" value="Mt_carrier_dom_sf"/>
</dbReference>
<dbReference type="PANTHER" id="PTHR45635">
    <property type="entry name" value="ADP,ATP CARRIER PROTEIN 1-RELATED-RELATED"/>
    <property type="match status" value="1"/>
</dbReference>
<dbReference type="PANTHER" id="PTHR45635:SF40">
    <property type="entry name" value="ADP_ATP TRANSLOCASE 4"/>
    <property type="match status" value="1"/>
</dbReference>
<dbReference type="Pfam" id="PF00153">
    <property type="entry name" value="Mito_carr"/>
    <property type="match status" value="3"/>
</dbReference>
<dbReference type="PRINTS" id="PR00927">
    <property type="entry name" value="ADPTRNSLCASE"/>
</dbReference>
<dbReference type="PRINTS" id="PR00926">
    <property type="entry name" value="MITOCARRIER"/>
</dbReference>
<dbReference type="SUPFAM" id="SSF103506">
    <property type="entry name" value="Mitochondrial carrier"/>
    <property type="match status" value="1"/>
</dbReference>
<dbReference type="PROSITE" id="PS50920">
    <property type="entry name" value="SOLCAR"/>
    <property type="match status" value="3"/>
</dbReference>
<comment type="function">
    <text evidence="1 4 5 6">ADP:ATP antiporter that mediates import of ADP into the mitochondrial matrix for ATP synthesis, and export of ATP out to fuel the cell (By similarity). Cycles between the cytoplasmic-open state (c-state) and the matrix-open state (m-state): operates by the alternating access mechanism with a single substrate-binding site intermittently exposed to either the cytosolic (c-state) or matrix (m-state) side of the inner mitochondrial membrane (By similarity). Specifically required during spermatogenesis, probably to mediate ADP:ATP exchange in spermatocytes. Large ATP supplies from mitochondria may be critical for normal progression of spermatogenesis during early stages of meiotic prophase I, including DNA double-strand break repair and chromosomal synapsis. In addition to its ADP:ATP antiporter activity, also involved in mitochondrial uncoupling and mitochondrial permeability transition pore (mPTP) activity (By similarity). Plays a role in mitochondrial uncoupling by acting as a proton transporter: proton transport uncouples the proton flows via the electron transport chain and ATP synthase to reduce the efficiency of ATP production and cause mitochondrial thermogenesis. Proton transporter activity is inhibited by ADP:ATP antiporter activity, suggesting that SLC25A31/ANT4 acts as a master regulator of mitochondrial energy output by maintaining a delicate balance between ATP production (ADP:ATP antiporter activity) and thermogenesis (proton transporter activity). Proton transporter activity requires free fatty acids as cofactor, but does not transport it (By similarity). Among nucleotides, may also exchange ADP for dATP and dADP (By similarity). Also plays a key role in mPTP opening, a non-specific pore that enables free passage of the mitochondrial membranes to solutes of up to 1.5 kDa, and which contributes to cell death. It is however unclear if SLC25A31/ANT4 constitutes a pore-forming component of mPTP or regulates it (By similarity).</text>
</comment>
<comment type="catalytic activity">
    <reaction evidence="4 6">
        <text>ADP(in) + ATP(out) = ADP(out) + ATP(in)</text>
        <dbReference type="Rhea" id="RHEA:34999"/>
        <dbReference type="ChEBI" id="CHEBI:30616"/>
        <dbReference type="ChEBI" id="CHEBI:456216"/>
    </reaction>
    <physiologicalReaction direction="left-to-right" evidence="6">
        <dbReference type="Rhea" id="RHEA:35000"/>
    </physiologicalReaction>
    <physiologicalReaction direction="right-to-left" evidence="6">
        <dbReference type="Rhea" id="RHEA:35001"/>
    </physiologicalReaction>
</comment>
<comment type="catalytic activity">
    <reaction evidence="6">
        <text>dATP(out) + ADP(in) = dATP(in) + ADP(out)</text>
        <dbReference type="Rhea" id="RHEA:73699"/>
        <dbReference type="ChEBI" id="CHEBI:61404"/>
        <dbReference type="ChEBI" id="CHEBI:456216"/>
    </reaction>
    <physiologicalReaction direction="left-to-right" evidence="6">
        <dbReference type="Rhea" id="RHEA:73700"/>
    </physiologicalReaction>
    <physiologicalReaction direction="right-to-left" evidence="6">
        <dbReference type="Rhea" id="RHEA:73701"/>
    </physiologicalReaction>
</comment>
<comment type="catalytic activity">
    <reaction evidence="6">
        <text>dADP(in) + ADP(out) = dADP(out) + ADP(in)</text>
        <dbReference type="Rhea" id="RHEA:72855"/>
        <dbReference type="ChEBI" id="CHEBI:57667"/>
        <dbReference type="ChEBI" id="CHEBI:456216"/>
    </reaction>
    <physiologicalReaction direction="left-to-right" evidence="6">
        <dbReference type="Rhea" id="RHEA:72856"/>
    </physiologicalReaction>
    <physiologicalReaction direction="right-to-left" evidence="6">
        <dbReference type="Rhea" id="RHEA:72857"/>
    </physiologicalReaction>
</comment>
<comment type="catalytic activity">
    <reaction evidence="4">
        <text>H(+)(in) = H(+)(out)</text>
        <dbReference type="Rhea" id="RHEA:34979"/>
        <dbReference type="ChEBI" id="CHEBI:15378"/>
    </reaction>
</comment>
<comment type="activity regulation">
    <text evidence="1 4">The matrix-open state (m-state) is inhibited by the membrane-permeable bongkrekic acid (BKA). The cytoplasmic-open state (c-state) is inhibited by the membrane-impermeable toxic inhibitor carboxyatractyloside (CATR) (By similarity). Proton transporter activity is inhibited by ADP:ATP antiporter activity (By similarity).</text>
</comment>
<comment type="subunit">
    <text evidence="1 2">Monomer.</text>
</comment>
<comment type="subcellular location">
    <subcellularLocation>
        <location evidence="2 6">Mitochondrion inner membrane</location>
        <topology evidence="7">Multi-pass membrane protein</topology>
    </subcellularLocation>
    <subcellularLocation>
        <location evidence="6">Membrane</location>
        <topology evidence="7">Multi-pass membrane protein</topology>
    </subcellularLocation>
    <subcellularLocation>
        <location evidence="5">Cell projection</location>
        <location evidence="5">Cilium</location>
        <location evidence="5">Flagellum membrane</location>
        <topology evidence="7">Multi-pass membrane protein</topology>
    </subcellularLocation>
    <text evidence="6">In sperm flagellum this protein is located in the fibrous sheath, a non-mitochondrial region (By similarity). May localize to non-mitochondrial membranes (By similarity).</text>
</comment>
<comment type="domain">
    <text evidence="2">The transmembrane helices are not perpendicular to the plane of the membrane, but cross the membrane at an angle. Odd-numbered transmembrane helices exhibit a sharp kink, due to the presence of a conserved proline residue.</text>
</comment>
<comment type="similarity">
    <text evidence="8">Belongs to the mitochondrial carrier (TC 2.A.29) family.</text>
</comment>
<proteinExistence type="evidence at transcript level"/>